<keyword id="KW-0028">Amino-acid biosynthesis</keyword>
<keyword id="KW-0055">Arginine biosynthesis</keyword>
<keyword id="KW-0067">ATP-binding</keyword>
<keyword id="KW-0963">Cytoplasm</keyword>
<keyword id="KW-0436">Ligase</keyword>
<keyword id="KW-0547">Nucleotide-binding</keyword>
<keyword id="KW-1185">Reference proteome</keyword>
<feature type="chain" id="PRO_0000263932" description="Argininosuccinate synthase">
    <location>
        <begin position="1"/>
        <end position="413"/>
    </location>
</feature>
<feature type="binding site" evidence="1">
    <location>
        <begin position="14"/>
        <end position="22"/>
    </location>
    <ligand>
        <name>ATP</name>
        <dbReference type="ChEBI" id="CHEBI:30616"/>
    </ligand>
</feature>
<feature type="binding site" evidence="1">
    <location>
        <position position="41"/>
    </location>
    <ligand>
        <name>ATP</name>
        <dbReference type="ChEBI" id="CHEBI:30616"/>
    </ligand>
</feature>
<feature type="binding site" evidence="1">
    <location>
        <position position="94"/>
    </location>
    <ligand>
        <name>L-citrulline</name>
        <dbReference type="ChEBI" id="CHEBI:57743"/>
    </ligand>
</feature>
<feature type="binding site" evidence="1">
    <location>
        <position position="99"/>
    </location>
    <ligand>
        <name>L-citrulline</name>
        <dbReference type="ChEBI" id="CHEBI:57743"/>
    </ligand>
</feature>
<feature type="binding site" evidence="1">
    <location>
        <position position="124"/>
    </location>
    <ligand>
        <name>ATP</name>
        <dbReference type="ChEBI" id="CHEBI:30616"/>
    </ligand>
</feature>
<feature type="binding site" evidence="1">
    <location>
        <position position="126"/>
    </location>
    <ligand>
        <name>L-aspartate</name>
        <dbReference type="ChEBI" id="CHEBI:29991"/>
    </ligand>
</feature>
<feature type="binding site" evidence="1">
    <location>
        <position position="130"/>
    </location>
    <ligand>
        <name>L-aspartate</name>
        <dbReference type="ChEBI" id="CHEBI:29991"/>
    </ligand>
</feature>
<feature type="binding site" evidence="1">
    <location>
        <position position="130"/>
    </location>
    <ligand>
        <name>L-citrulline</name>
        <dbReference type="ChEBI" id="CHEBI:57743"/>
    </ligand>
</feature>
<feature type="binding site" evidence="1">
    <location>
        <position position="131"/>
    </location>
    <ligand>
        <name>L-aspartate</name>
        <dbReference type="ChEBI" id="CHEBI:29991"/>
    </ligand>
</feature>
<feature type="binding site" evidence="1">
    <location>
        <position position="134"/>
    </location>
    <ligand>
        <name>L-citrulline</name>
        <dbReference type="ChEBI" id="CHEBI:57743"/>
    </ligand>
</feature>
<feature type="binding site" evidence="1">
    <location>
        <position position="185"/>
    </location>
    <ligand>
        <name>L-citrulline</name>
        <dbReference type="ChEBI" id="CHEBI:57743"/>
    </ligand>
</feature>
<feature type="binding site" evidence="1">
    <location>
        <position position="194"/>
    </location>
    <ligand>
        <name>L-citrulline</name>
        <dbReference type="ChEBI" id="CHEBI:57743"/>
    </ligand>
</feature>
<feature type="binding site" evidence="1">
    <location>
        <position position="270"/>
    </location>
    <ligand>
        <name>L-citrulline</name>
        <dbReference type="ChEBI" id="CHEBI:57743"/>
    </ligand>
</feature>
<feature type="binding site" evidence="1">
    <location>
        <position position="282"/>
    </location>
    <ligand>
        <name>L-citrulline</name>
        <dbReference type="ChEBI" id="CHEBI:57743"/>
    </ligand>
</feature>
<organism>
    <name type="scientific">Hyphomonas neptunium (strain ATCC 15444)</name>
    <dbReference type="NCBI Taxonomy" id="228405"/>
    <lineage>
        <taxon>Bacteria</taxon>
        <taxon>Pseudomonadati</taxon>
        <taxon>Pseudomonadota</taxon>
        <taxon>Alphaproteobacteria</taxon>
        <taxon>Hyphomonadales</taxon>
        <taxon>Hyphomonadaceae</taxon>
        <taxon>Hyphomonas</taxon>
    </lineage>
</organism>
<protein>
    <recommendedName>
        <fullName evidence="1">Argininosuccinate synthase</fullName>
        <ecNumber evidence="1">6.3.4.5</ecNumber>
    </recommendedName>
    <alternativeName>
        <fullName evidence="1">Citrulline--aspartate ligase</fullName>
    </alternativeName>
</protein>
<proteinExistence type="inferred from homology"/>
<reference key="1">
    <citation type="journal article" date="2006" name="J. Bacteriol.">
        <title>Comparative genomic evidence for a close relationship between the dimorphic prosthecate bacteria Hyphomonas neptunium and Caulobacter crescentus.</title>
        <authorList>
            <person name="Badger J.H."/>
            <person name="Hoover T.R."/>
            <person name="Brun Y.V."/>
            <person name="Weiner R.M."/>
            <person name="Laub M.T."/>
            <person name="Alexandre G."/>
            <person name="Mrazek J."/>
            <person name="Ren Q."/>
            <person name="Paulsen I.T."/>
            <person name="Nelson K.E."/>
            <person name="Khouri H.M."/>
            <person name="Radune D."/>
            <person name="Sosa J."/>
            <person name="Dodson R.J."/>
            <person name="Sullivan S.A."/>
            <person name="Rosovitz M.J."/>
            <person name="Madupu R."/>
            <person name="Brinkac L.M."/>
            <person name="Durkin A.S."/>
            <person name="Daugherty S.C."/>
            <person name="Kothari S.P."/>
            <person name="Giglio M.G."/>
            <person name="Zhou L."/>
            <person name="Haft D.H."/>
            <person name="Selengut J.D."/>
            <person name="Davidsen T.M."/>
            <person name="Yang Q."/>
            <person name="Zafar N."/>
            <person name="Ward N.L."/>
        </authorList>
    </citation>
    <scope>NUCLEOTIDE SEQUENCE [LARGE SCALE GENOMIC DNA]</scope>
    <source>
        <strain>ATCC 15444</strain>
    </source>
</reference>
<accession>Q0BWI1</accession>
<dbReference type="EC" id="6.3.4.5" evidence="1"/>
<dbReference type="EMBL" id="CP000158">
    <property type="protein sequence ID" value="ABI77474.1"/>
    <property type="molecule type" value="Genomic_DNA"/>
</dbReference>
<dbReference type="RefSeq" id="WP_011648456.1">
    <property type="nucleotide sequence ID" value="NC_008358.1"/>
</dbReference>
<dbReference type="SMR" id="Q0BWI1"/>
<dbReference type="STRING" id="228405.HNE_3491"/>
<dbReference type="KEGG" id="hne:HNE_3491"/>
<dbReference type="eggNOG" id="COG0137">
    <property type="taxonomic scope" value="Bacteria"/>
</dbReference>
<dbReference type="HOGENOM" id="CLU_032784_4_2_5"/>
<dbReference type="UniPathway" id="UPA00068">
    <property type="reaction ID" value="UER00113"/>
</dbReference>
<dbReference type="Proteomes" id="UP000001959">
    <property type="component" value="Chromosome"/>
</dbReference>
<dbReference type="GO" id="GO:0005737">
    <property type="term" value="C:cytoplasm"/>
    <property type="evidence" value="ECO:0007669"/>
    <property type="project" value="UniProtKB-SubCell"/>
</dbReference>
<dbReference type="GO" id="GO:0004055">
    <property type="term" value="F:argininosuccinate synthase activity"/>
    <property type="evidence" value="ECO:0007669"/>
    <property type="project" value="UniProtKB-UniRule"/>
</dbReference>
<dbReference type="GO" id="GO:0005524">
    <property type="term" value="F:ATP binding"/>
    <property type="evidence" value="ECO:0007669"/>
    <property type="project" value="UniProtKB-UniRule"/>
</dbReference>
<dbReference type="GO" id="GO:0000053">
    <property type="term" value="P:argininosuccinate metabolic process"/>
    <property type="evidence" value="ECO:0007669"/>
    <property type="project" value="TreeGrafter"/>
</dbReference>
<dbReference type="GO" id="GO:0006526">
    <property type="term" value="P:L-arginine biosynthetic process"/>
    <property type="evidence" value="ECO:0007669"/>
    <property type="project" value="UniProtKB-UniRule"/>
</dbReference>
<dbReference type="GO" id="GO:0000050">
    <property type="term" value="P:urea cycle"/>
    <property type="evidence" value="ECO:0007669"/>
    <property type="project" value="TreeGrafter"/>
</dbReference>
<dbReference type="CDD" id="cd01999">
    <property type="entry name" value="ASS"/>
    <property type="match status" value="1"/>
</dbReference>
<dbReference type="FunFam" id="3.40.50.620:FF:000019">
    <property type="entry name" value="Argininosuccinate synthase"/>
    <property type="match status" value="1"/>
</dbReference>
<dbReference type="FunFam" id="3.90.1260.10:FF:000007">
    <property type="entry name" value="Argininosuccinate synthase"/>
    <property type="match status" value="1"/>
</dbReference>
<dbReference type="Gene3D" id="3.90.1260.10">
    <property type="entry name" value="Argininosuccinate synthetase, chain A, domain 2"/>
    <property type="match status" value="1"/>
</dbReference>
<dbReference type="Gene3D" id="3.40.50.620">
    <property type="entry name" value="HUPs"/>
    <property type="match status" value="1"/>
</dbReference>
<dbReference type="Gene3D" id="1.20.5.470">
    <property type="entry name" value="Single helix bin"/>
    <property type="match status" value="1"/>
</dbReference>
<dbReference type="HAMAP" id="MF_00005">
    <property type="entry name" value="Arg_succ_synth_type1"/>
    <property type="match status" value="1"/>
</dbReference>
<dbReference type="InterPro" id="IPR048268">
    <property type="entry name" value="Arginosuc_syn_C"/>
</dbReference>
<dbReference type="InterPro" id="IPR048267">
    <property type="entry name" value="Arginosuc_syn_N"/>
</dbReference>
<dbReference type="InterPro" id="IPR001518">
    <property type="entry name" value="Arginosuc_synth"/>
</dbReference>
<dbReference type="InterPro" id="IPR018223">
    <property type="entry name" value="Arginosuc_synth_CS"/>
</dbReference>
<dbReference type="InterPro" id="IPR023434">
    <property type="entry name" value="Arginosuc_synth_type_1_subfam"/>
</dbReference>
<dbReference type="InterPro" id="IPR024074">
    <property type="entry name" value="AS_cat/multimer_dom_body"/>
</dbReference>
<dbReference type="InterPro" id="IPR014729">
    <property type="entry name" value="Rossmann-like_a/b/a_fold"/>
</dbReference>
<dbReference type="NCBIfam" id="TIGR00032">
    <property type="entry name" value="argG"/>
    <property type="match status" value="1"/>
</dbReference>
<dbReference type="NCBIfam" id="NF001770">
    <property type="entry name" value="PRK00509.1"/>
    <property type="match status" value="1"/>
</dbReference>
<dbReference type="PANTHER" id="PTHR11587">
    <property type="entry name" value="ARGININOSUCCINATE SYNTHASE"/>
    <property type="match status" value="1"/>
</dbReference>
<dbReference type="PANTHER" id="PTHR11587:SF2">
    <property type="entry name" value="ARGININOSUCCINATE SYNTHASE"/>
    <property type="match status" value="1"/>
</dbReference>
<dbReference type="Pfam" id="PF20979">
    <property type="entry name" value="Arginosuc_syn_C"/>
    <property type="match status" value="1"/>
</dbReference>
<dbReference type="Pfam" id="PF00764">
    <property type="entry name" value="Arginosuc_synth"/>
    <property type="match status" value="1"/>
</dbReference>
<dbReference type="SUPFAM" id="SSF52402">
    <property type="entry name" value="Adenine nucleotide alpha hydrolases-like"/>
    <property type="match status" value="1"/>
</dbReference>
<dbReference type="SUPFAM" id="SSF69864">
    <property type="entry name" value="Argininosuccinate synthetase, C-terminal domain"/>
    <property type="match status" value="1"/>
</dbReference>
<dbReference type="PROSITE" id="PS00564">
    <property type="entry name" value="ARGININOSUCCIN_SYN_1"/>
    <property type="match status" value="1"/>
</dbReference>
<dbReference type="PROSITE" id="PS00565">
    <property type="entry name" value="ARGININOSUCCIN_SYN_2"/>
    <property type="match status" value="1"/>
</dbReference>
<evidence type="ECO:0000255" key="1">
    <source>
        <dbReference type="HAMAP-Rule" id="MF_00005"/>
    </source>
</evidence>
<sequence>MSNAASAPKKVVLAYSGGLDTSIILKWLQVEFGCEVVTFTADLGQGEELEPARKKALAAGVKPENIFIEDVREEFVRDFVFPMFRANAVYEGVYLLGTSIARPLIAKRQIEIADMVGADAVCHGATGKGNDQVRFELGYYGLNPDIKVIAPWRDWAFKSRTDLLKFAEEHGIEIAKDKRGEAPFSVDANLLHSSSEGKVLENPAEPAPEFVHMRTVSPEDAPDQAEVITISFEKGDAVAINGEAMSPATLLTALNAYGKKHGIGRLDLLENRFVGMKSRGIYETPGGTILLVAHRGIEQATLDRGAAHLKDELMPKYAELIYNGFWWSPEREMLQAAIDHSQRWVTGDVTMKLYKGNAYLIGRSSPYSLYSEKIVTFEDDHGAYDQKDAAGFIKLNALRLRLLAGRDRKFGKN</sequence>
<name>ASSY_HYPNA</name>
<comment type="catalytic activity">
    <reaction evidence="1">
        <text>L-citrulline + L-aspartate + ATP = 2-(N(omega)-L-arginino)succinate + AMP + diphosphate + H(+)</text>
        <dbReference type="Rhea" id="RHEA:10932"/>
        <dbReference type="ChEBI" id="CHEBI:15378"/>
        <dbReference type="ChEBI" id="CHEBI:29991"/>
        <dbReference type="ChEBI" id="CHEBI:30616"/>
        <dbReference type="ChEBI" id="CHEBI:33019"/>
        <dbReference type="ChEBI" id="CHEBI:57472"/>
        <dbReference type="ChEBI" id="CHEBI:57743"/>
        <dbReference type="ChEBI" id="CHEBI:456215"/>
        <dbReference type="EC" id="6.3.4.5"/>
    </reaction>
</comment>
<comment type="pathway">
    <text evidence="1">Amino-acid biosynthesis; L-arginine biosynthesis; L-arginine from L-ornithine and carbamoyl phosphate: step 2/3.</text>
</comment>
<comment type="subunit">
    <text evidence="1">Homotetramer.</text>
</comment>
<comment type="subcellular location">
    <subcellularLocation>
        <location evidence="1">Cytoplasm</location>
    </subcellularLocation>
</comment>
<comment type="similarity">
    <text evidence="1">Belongs to the argininosuccinate synthase family. Type 1 subfamily.</text>
</comment>
<gene>
    <name evidence="1" type="primary">argG</name>
    <name type="ordered locus">HNE_3491</name>
</gene>